<reference key="1">
    <citation type="journal article" date="2004" name="Genome Res.">
        <title>The status, quality, and expansion of the NIH full-length cDNA project: the Mammalian Gene Collection (MGC).</title>
        <authorList>
            <consortium name="The MGC Project Team"/>
        </authorList>
    </citation>
    <scope>NUCLEOTIDE SEQUENCE [LARGE SCALE MRNA]</scope>
    <source>
        <tissue>Kidney</tissue>
    </source>
</reference>
<proteinExistence type="evidence at transcript level"/>
<organism>
    <name type="scientific">Rattus norvegicus</name>
    <name type="common">Rat</name>
    <dbReference type="NCBI Taxonomy" id="10116"/>
    <lineage>
        <taxon>Eukaryota</taxon>
        <taxon>Metazoa</taxon>
        <taxon>Chordata</taxon>
        <taxon>Craniata</taxon>
        <taxon>Vertebrata</taxon>
        <taxon>Euteleostomi</taxon>
        <taxon>Mammalia</taxon>
        <taxon>Eutheria</taxon>
        <taxon>Euarchontoglires</taxon>
        <taxon>Glires</taxon>
        <taxon>Rodentia</taxon>
        <taxon>Myomorpha</taxon>
        <taxon>Muroidea</taxon>
        <taxon>Muridae</taxon>
        <taxon>Murinae</taxon>
        <taxon>Rattus</taxon>
    </lineage>
</organism>
<evidence type="ECO:0000250" key="1">
    <source>
        <dbReference type="UniProtKB" id="Q4KL35"/>
    </source>
</evidence>
<evidence type="ECO:0000255" key="2">
    <source>
        <dbReference type="PROSITE-ProRule" id="PRU00143"/>
    </source>
</evidence>
<evidence type="ECO:0000256" key="3">
    <source>
        <dbReference type="SAM" id="MobiDB-lite"/>
    </source>
</evidence>
<gene>
    <name type="primary">Magix</name>
</gene>
<keyword id="KW-0597">Phosphoprotein</keyword>
<keyword id="KW-1185">Reference proteome</keyword>
<name>MAGIX_RAT</name>
<feature type="chain" id="PRO_0000310544" description="PDZ domain-containing protein MAGIX">
    <location>
        <begin position="1"/>
        <end position="326"/>
    </location>
</feature>
<feature type="domain" description="PDZ" evidence="2">
    <location>
        <begin position="128"/>
        <end position="212"/>
    </location>
</feature>
<feature type="region of interest" description="Disordered" evidence="3">
    <location>
        <begin position="1"/>
        <end position="32"/>
    </location>
</feature>
<feature type="region of interest" description="Disordered" evidence="3">
    <location>
        <begin position="214"/>
        <end position="267"/>
    </location>
</feature>
<feature type="compositionally biased region" description="Basic and acidic residues" evidence="3">
    <location>
        <begin position="218"/>
        <end position="242"/>
    </location>
</feature>
<feature type="modified residue" description="Phosphoserine" evidence="1">
    <location>
        <position position="263"/>
    </location>
</feature>
<protein>
    <recommendedName>
        <fullName>PDZ domain-containing protein MAGIX</fullName>
    </recommendedName>
</protein>
<accession>Q6AYQ0</accession>
<dbReference type="EMBL" id="BC078960">
    <property type="protein sequence ID" value="AAH78960.1"/>
    <property type="molecule type" value="mRNA"/>
</dbReference>
<dbReference type="RefSeq" id="NP_001014131.1">
    <property type="nucleotide sequence ID" value="NM_001014109.1"/>
</dbReference>
<dbReference type="SMR" id="Q6AYQ0"/>
<dbReference type="FunCoup" id="Q6AYQ0">
    <property type="interactions" value="96"/>
</dbReference>
<dbReference type="STRING" id="10116.ENSRNOP00000013553"/>
<dbReference type="PhosphoSitePlus" id="Q6AYQ0"/>
<dbReference type="PaxDb" id="10116-ENSRNOP00000013553"/>
<dbReference type="Ensembl" id="ENSRNOT00000013553.5">
    <property type="protein sequence ID" value="ENSRNOP00000013553.3"/>
    <property type="gene ID" value="ENSRNOG00000010092.5"/>
</dbReference>
<dbReference type="GeneID" id="317379"/>
<dbReference type="KEGG" id="rno:317379"/>
<dbReference type="UCSC" id="RGD:1549729">
    <property type="organism name" value="rat"/>
</dbReference>
<dbReference type="AGR" id="RGD:1549729"/>
<dbReference type="CTD" id="79917"/>
<dbReference type="RGD" id="1549729">
    <property type="gene designation" value="Magix"/>
</dbReference>
<dbReference type="eggNOG" id="KOG3209">
    <property type="taxonomic scope" value="Eukaryota"/>
</dbReference>
<dbReference type="GeneTree" id="ENSGT00940000162529"/>
<dbReference type="HOGENOM" id="CLU_076904_0_0_1"/>
<dbReference type="InParanoid" id="Q6AYQ0"/>
<dbReference type="OMA" id="VEHQPQH"/>
<dbReference type="OrthoDB" id="66881at2759"/>
<dbReference type="PhylomeDB" id="Q6AYQ0"/>
<dbReference type="TreeFam" id="TF315536"/>
<dbReference type="PRO" id="PR:Q6AYQ0"/>
<dbReference type="Proteomes" id="UP000002494">
    <property type="component" value="Chromosome X"/>
</dbReference>
<dbReference type="Bgee" id="ENSRNOG00000010092">
    <property type="expression patterns" value="Expressed in skeletal muscle tissue and 17 other cell types or tissues"/>
</dbReference>
<dbReference type="CDD" id="cd06735">
    <property type="entry name" value="PDZ5_MAGI-1_3-like"/>
    <property type="match status" value="1"/>
</dbReference>
<dbReference type="Gene3D" id="2.30.42.10">
    <property type="match status" value="1"/>
</dbReference>
<dbReference type="InterPro" id="IPR030031">
    <property type="entry name" value="MAGIX"/>
</dbReference>
<dbReference type="InterPro" id="IPR001478">
    <property type="entry name" value="PDZ"/>
</dbReference>
<dbReference type="InterPro" id="IPR036034">
    <property type="entry name" value="PDZ_sf"/>
</dbReference>
<dbReference type="PANTHER" id="PTHR47646">
    <property type="entry name" value="PDZ DOMAIN-CONTAINING PROTEIN MAGIX"/>
    <property type="match status" value="1"/>
</dbReference>
<dbReference type="PANTHER" id="PTHR47646:SF1">
    <property type="entry name" value="PDZ DOMAIN-CONTAINING PROTEIN MAGIX"/>
    <property type="match status" value="1"/>
</dbReference>
<dbReference type="Pfam" id="PF00595">
    <property type="entry name" value="PDZ"/>
    <property type="match status" value="1"/>
</dbReference>
<dbReference type="SMART" id="SM00228">
    <property type="entry name" value="PDZ"/>
    <property type="match status" value="1"/>
</dbReference>
<dbReference type="SUPFAM" id="SSF50156">
    <property type="entry name" value="PDZ domain-like"/>
    <property type="match status" value="1"/>
</dbReference>
<dbReference type="PROSITE" id="PS50106">
    <property type="entry name" value="PDZ"/>
    <property type="match status" value="1"/>
</dbReference>
<sequence length="326" mass="34743">MDSHAGNTADPRGSRRGVGLQGSGSPRARQLLERLDARPLAARAAADLSALVRKAGATLRLRHKEAISGLDSADIEVADSRLPHATLVEHRPQHQRSDTQGPRMEPLPVIQNKASYASRLPQATGRFSVELVRGPAGFGLTLSGGRNVSGNVPLAVCGLLKDGPAQRCGHLQAGDLVLYINGQSTRGLTHAQAVEWIRTGGPRLCLVLQRPQEMNGSRSKEVGGGHQKTDRIPDPRGGRMMESRGTISPVHHRPKTRTGPGPSPESVATGHVVRAAEHPAEDLEDRIPGSPGPWLVPSEDRLSRALGIRGGGVQLAQEMAAGRRRH</sequence>